<dbReference type="EC" id="2.7.7.6" evidence="1"/>
<dbReference type="EMBL" id="AL939121">
    <property type="protein sequence ID" value="CAB77428.1"/>
    <property type="molecule type" value="Genomic_DNA"/>
</dbReference>
<dbReference type="RefSeq" id="NP_628815.1">
    <property type="nucleotide sequence ID" value="NC_003888.3"/>
</dbReference>
<dbReference type="RefSeq" id="WP_011029792.1">
    <property type="nucleotide sequence ID" value="NZ_VNID01000028.1"/>
</dbReference>
<dbReference type="PDB" id="7VPD">
    <property type="method" value="EM"/>
    <property type="resolution" value="3.77 A"/>
    <property type="chains" value="C=1-1161"/>
</dbReference>
<dbReference type="PDB" id="7VPZ">
    <property type="method" value="EM"/>
    <property type="resolution" value="4.14 A"/>
    <property type="chains" value="C=1-1161"/>
</dbReference>
<dbReference type="PDB" id="7X74">
    <property type="method" value="EM"/>
    <property type="resolution" value="3.70 A"/>
    <property type="chains" value="C=1-1161"/>
</dbReference>
<dbReference type="PDB" id="7X75">
    <property type="method" value="EM"/>
    <property type="resolution" value="3.45 A"/>
    <property type="chains" value="C=1-1161"/>
</dbReference>
<dbReference type="PDB" id="7X76">
    <property type="method" value="EM"/>
    <property type="resolution" value="3.67 A"/>
    <property type="chains" value="C=1-1161"/>
</dbReference>
<dbReference type="PDB" id="8HVR">
    <property type="method" value="EM"/>
    <property type="resolution" value="3.35 A"/>
    <property type="chains" value="C=1-1161"/>
</dbReference>
<dbReference type="PDB" id="8JKE">
    <property type="method" value="EM"/>
    <property type="resolution" value="3.67 A"/>
    <property type="chains" value="C=1-1161"/>
</dbReference>
<dbReference type="PDB" id="8K60">
    <property type="method" value="EM"/>
    <property type="resolution" value="3.40 A"/>
    <property type="chains" value="C=1-1161"/>
</dbReference>
<dbReference type="PDBsum" id="7VPD"/>
<dbReference type="PDBsum" id="7VPZ"/>
<dbReference type="PDBsum" id="7X74"/>
<dbReference type="PDBsum" id="7X75"/>
<dbReference type="PDBsum" id="7X76"/>
<dbReference type="PDBsum" id="8HVR"/>
<dbReference type="PDBsum" id="8JKE"/>
<dbReference type="PDBsum" id="8K60"/>
<dbReference type="EMDB" id="EMD-32063"/>
<dbReference type="EMDB" id="EMD-32077"/>
<dbReference type="EMDB" id="EMD-33031"/>
<dbReference type="EMDB" id="EMD-33032"/>
<dbReference type="EMDB" id="EMD-33033"/>
<dbReference type="EMDB" id="EMD-35047"/>
<dbReference type="EMDB" id="EMD-36370"/>
<dbReference type="EMDB" id="EMD-36914"/>
<dbReference type="SMR" id="Q9L0L0"/>
<dbReference type="FunCoup" id="Q9L0L0">
    <property type="interactions" value="343"/>
</dbReference>
<dbReference type="STRING" id="100226.gene:17762303"/>
<dbReference type="PaxDb" id="100226-SCO4654"/>
<dbReference type="KEGG" id="sco:SCO4654"/>
<dbReference type="PATRIC" id="fig|100226.15.peg.4725"/>
<dbReference type="eggNOG" id="COG0085">
    <property type="taxonomic scope" value="Bacteria"/>
</dbReference>
<dbReference type="HOGENOM" id="CLU_000524_4_1_11"/>
<dbReference type="InParanoid" id="Q9L0L0"/>
<dbReference type="OrthoDB" id="9803954at2"/>
<dbReference type="PhylomeDB" id="Q9L0L0"/>
<dbReference type="Proteomes" id="UP000001973">
    <property type="component" value="Chromosome"/>
</dbReference>
<dbReference type="GO" id="GO:0000428">
    <property type="term" value="C:DNA-directed RNA polymerase complex"/>
    <property type="evidence" value="ECO:0007669"/>
    <property type="project" value="UniProtKB-KW"/>
</dbReference>
<dbReference type="GO" id="GO:0003677">
    <property type="term" value="F:DNA binding"/>
    <property type="evidence" value="ECO:0007669"/>
    <property type="project" value="UniProtKB-UniRule"/>
</dbReference>
<dbReference type="GO" id="GO:0003899">
    <property type="term" value="F:DNA-directed RNA polymerase activity"/>
    <property type="evidence" value="ECO:0007669"/>
    <property type="project" value="UniProtKB-UniRule"/>
</dbReference>
<dbReference type="GO" id="GO:0032549">
    <property type="term" value="F:ribonucleoside binding"/>
    <property type="evidence" value="ECO:0007669"/>
    <property type="project" value="InterPro"/>
</dbReference>
<dbReference type="GO" id="GO:0006351">
    <property type="term" value="P:DNA-templated transcription"/>
    <property type="evidence" value="ECO:0007669"/>
    <property type="project" value="UniProtKB-UniRule"/>
</dbReference>
<dbReference type="CDD" id="cd00653">
    <property type="entry name" value="RNA_pol_B_RPB2"/>
    <property type="match status" value="1"/>
</dbReference>
<dbReference type="FunFam" id="3.90.1110.10:FF:000001">
    <property type="entry name" value="DNA-directed RNA polymerase subunit beta"/>
    <property type="match status" value="1"/>
</dbReference>
<dbReference type="FunFam" id="3.90.1800.10:FF:000001">
    <property type="entry name" value="DNA-directed RNA polymerase subunit beta"/>
    <property type="match status" value="1"/>
</dbReference>
<dbReference type="Gene3D" id="2.40.50.100">
    <property type="match status" value="1"/>
</dbReference>
<dbReference type="Gene3D" id="2.40.50.150">
    <property type="match status" value="1"/>
</dbReference>
<dbReference type="Gene3D" id="3.90.1100.10">
    <property type="match status" value="1"/>
</dbReference>
<dbReference type="Gene3D" id="2.30.150.10">
    <property type="entry name" value="DNA-directed RNA polymerase, beta subunit, external 1 domain"/>
    <property type="match status" value="1"/>
</dbReference>
<dbReference type="Gene3D" id="2.40.270.10">
    <property type="entry name" value="DNA-directed RNA polymerase, subunit 2, domain 6"/>
    <property type="match status" value="1"/>
</dbReference>
<dbReference type="Gene3D" id="3.90.1800.10">
    <property type="entry name" value="RNA polymerase alpha subunit dimerisation domain"/>
    <property type="match status" value="1"/>
</dbReference>
<dbReference type="Gene3D" id="3.90.1110.10">
    <property type="entry name" value="RNA polymerase Rpb2, domain 2"/>
    <property type="match status" value="1"/>
</dbReference>
<dbReference type="HAMAP" id="MF_01321">
    <property type="entry name" value="RNApol_bact_RpoB"/>
    <property type="match status" value="1"/>
</dbReference>
<dbReference type="InterPro" id="IPR042107">
    <property type="entry name" value="DNA-dir_RNA_pol_bsu_ext_1_sf"/>
</dbReference>
<dbReference type="InterPro" id="IPR019462">
    <property type="entry name" value="DNA-dir_RNA_pol_bsu_external_1"/>
</dbReference>
<dbReference type="InterPro" id="IPR015712">
    <property type="entry name" value="DNA-dir_RNA_pol_su2"/>
</dbReference>
<dbReference type="InterPro" id="IPR007120">
    <property type="entry name" value="DNA-dir_RNAP_su2_dom"/>
</dbReference>
<dbReference type="InterPro" id="IPR037033">
    <property type="entry name" value="DNA-dir_RNAP_su2_hyb_sf"/>
</dbReference>
<dbReference type="InterPro" id="IPR010243">
    <property type="entry name" value="RNA_pol_bsu_bac"/>
</dbReference>
<dbReference type="InterPro" id="IPR007121">
    <property type="entry name" value="RNA_pol_bsu_CS"/>
</dbReference>
<dbReference type="InterPro" id="IPR007644">
    <property type="entry name" value="RNA_pol_bsu_protrusion"/>
</dbReference>
<dbReference type="InterPro" id="IPR007642">
    <property type="entry name" value="RNA_pol_Rpb2_2"/>
</dbReference>
<dbReference type="InterPro" id="IPR037034">
    <property type="entry name" value="RNA_pol_Rpb2_2_sf"/>
</dbReference>
<dbReference type="InterPro" id="IPR007645">
    <property type="entry name" value="RNA_pol_Rpb2_3"/>
</dbReference>
<dbReference type="InterPro" id="IPR007641">
    <property type="entry name" value="RNA_pol_Rpb2_7"/>
</dbReference>
<dbReference type="InterPro" id="IPR014724">
    <property type="entry name" value="RNA_pol_RPB2_OB-fold"/>
</dbReference>
<dbReference type="NCBIfam" id="NF001616">
    <property type="entry name" value="PRK00405.1"/>
    <property type="match status" value="1"/>
</dbReference>
<dbReference type="NCBIfam" id="TIGR02013">
    <property type="entry name" value="rpoB"/>
    <property type="match status" value="1"/>
</dbReference>
<dbReference type="PANTHER" id="PTHR20856">
    <property type="entry name" value="DNA-DIRECTED RNA POLYMERASE I SUBUNIT 2"/>
    <property type="match status" value="1"/>
</dbReference>
<dbReference type="Pfam" id="PF04563">
    <property type="entry name" value="RNA_pol_Rpb2_1"/>
    <property type="match status" value="1"/>
</dbReference>
<dbReference type="Pfam" id="PF04561">
    <property type="entry name" value="RNA_pol_Rpb2_2"/>
    <property type="match status" value="1"/>
</dbReference>
<dbReference type="Pfam" id="PF04565">
    <property type="entry name" value="RNA_pol_Rpb2_3"/>
    <property type="match status" value="1"/>
</dbReference>
<dbReference type="Pfam" id="PF10385">
    <property type="entry name" value="RNA_pol_Rpb2_45"/>
    <property type="match status" value="1"/>
</dbReference>
<dbReference type="Pfam" id="PF00562">
    <property type="entry name" value="RNA_pol_Rpb2_6"/>
    <property type="match status" value="1"/>
</dbReference>
<dbReference type="Pfam" id="PF04560">
    <property type="entry name" value="RNA_pol_Rpb2_7"/>
    <property type="match status" value="1"/>
</dbReference>
<dbReference type="SUPFAM" id="SSF64484">
    <property type="entry name" value="beta and beta-prime subunits of DNA dependent RNA-polymerase"/>
    <property type="match status" value="1"/>
</dbReference>
<dbReference type="PROSITE" id="PS01166">
    <property type="entry name" value="RNA_POL_BETA"/>
    <property type="match status" value="1"/>
</dbReference>
<reference key="1">
    <citation type="journal article" date="2002" name="Nature">
        <title>Complete genome sequence of the model actinomycete Streptomyces coelicolor A3(2).</title>
        <authorList>
            <person name="Bentley S.D."/>
            <person name="Chater K.F."/>
            <person name="Cerdeno-Tarraga A.-M."/>
            <person name="Challis G.L."/>
            <person name="Thomson N.R."/>
            <person name="James K.D."/>
            <person name="Harris D.E."/>
            <person name="Quail M.A."/>
            <person name="Kieser H."/>
            <person name="Harper D."/>
            <person name="Bateman A."/>
            <person name="Brown S."/>
            <person name="Chandra G."/>
            <person name="Chen C.W."/>
            <person name="Collins M."/>
            <person name="Cronin A."/>
            <person name="Fraser A."/>
            <person name="Goble A."/>
            <person name="Hidalgo J."/>
            <person name="Hornsby T."/>
            <person name="Howarth S."/>
            <person name="Huang C.-H."/>
            <person name="Kieser T."/>
            <person name="Larke L."/>
            <person name="Murphy L.D."/>
            <person name="Oliver K."/>
            <person name="O'Neil S."/>
            <person name="Rabbinowitsch E."/>
            <person name="Rajandream M.A."/>
            <person name="Rutherford K.M."/>
            <person name="Rutter S."/>
            <person name="Seeger K."/>
            <person name="Saunders D."/>
            <person name="Sharp S."/>
            <person name="Squares R."/>
            <person name="Squares S."/>
            <person name="Taylor K."/>
            <person name="Warren T."/>
            <person name="Wietzorrek A."/>
            <person name="Woodward J.R."/>
            <person name="Barrell B.G."/>
            <person name="Parkhill J."/>
            <person name="Hopwood D.A."/>
        </authorList>
    </citation>
    <scope>NUCLEOTIDE SEQUENCE [LARGE SCALE GENOMIC DNA]</scope>
    <source>
        <strain>ATCC BAA-471 / A3(2) / M145</strain>
    </source>
</reference>
<reference key="2">
    <citation type="journal article" date="2013" name="Nucleic Acids Res.">
        <title>The actinobacterial transcription factor RbpA binds to the principal sigma subunit of RNA polymerase.</title>
        <authorList>
            <person name="Tabib-Salazar A."/>
            <person name="Liu B."/>
            <person name="Doughty P."/>
            <person name="Lewis R.A."/>
            <person name="Ghosh S."/>
            <person name="Parsy M.L."/>
            <person name="Simpson P.J."/>
            <person name="O'Dwyer K."/>
            <person name="Matthews S.J."/>
            <person name="Paget M.S."/>
        </authorList>
    </citation>
    <scope>SUBUNIT</scope>
    <source>
        <strain>ATCC BAA-471 / A3(2) / M145</strain>
    </source>
</reference>
<proteinExistence type="evidence at protein level"/>
<organism>
    <name type="scientific">Streptomyces coelicolor (strain ATCC BAA-471 / A3(2) / M145)</name>
    <dbReference type="NCBI Taxonomy" id="100226"/>
    <lineage>
        <taxon>Bacteria</taxon>
        <taxon>Bacillati</taxon>
        <taxon>Actinomycetota</taxon>
        <taxon>Actinomycetes</taxon>
        <taxon>Kitasatosporales</taxon>
        <taxon>Streptomycetaceae</taxon>
        <taxon>Streptomyces</taxon>
        <taxon>Streptomyces albidoflavus group</taxon>
    </lineage>
</organism>
<evidence type="ECO:0000255" key="1">
    <source>
        <dbReference type="HAMAP-Rule" id="MF_01321"/>
    </source>
</evidence>
<evidence type="ECO:0000269" key="2">
    <source>
    </source>
</evidence>
<evidence type="ECO:0007829" key="3">
    <source>
        <dbReference type="PDB" id="7X75"/>
    </source>
</evidence>
<evidence type="ECO:0007829" key="4">
    <source>
        <dbReference type="PDB" id="8HVR"/>
    </source>
</evidence>
<evidence type="ECO:0007829" key="5">
    <source>
        <dbReference type="PDB" id="8K60"/>
    </source>
</evidence>
<keyword id="KW-0002">3D-structure</keyword>
<keyword id="KW-0240">DNA-directed RNA polymerase</keyword>
<keyword id="KW-0548">Nucleotidyltransferase</keyword>
<keyword id="KW-1185">Reference proteome</keyword>
<keyword id="KW-0804">Transcription</keyword>
<keyword id="KW-0808">Transferase</keyword>
<gene>
    <name evidence="1" type="primary">rpoB</name>
    <name type="ordered locus">SCO4654</name>
    <name type="ORF">SCD82.26</name>
</gene>
<protein>
    <recommendedName>
        <fullName evidence="1">DNA-directed RNA polymerase subunit beta</fullName>
        <shortName evidence="1">RNAP subunit beta</shortName>
        <ecNumber evidence="1">2.7.7.6</ecNumber>
    </recommendedName>
    <alternativeName>
        <fullName evidence="1">RNA polymerase subunit beta</fullName>
    </alternativeName>
    <alternativeName>
        <fullName evidence="1">Transcriptase subunit beta</fullName>
    </alternativeName>
</protein>
<accession>Q9L0L0</accession>
<comment type="function">
    <text evidence="1">DNA-dependent RNA polymerase catalyzes the transcription of DNA into RNA using the four ribonucleoside triphosphates as substrates.</text>
</comment>
<comment type="catalytic activity">
    <reaction evidence="1">
        <text>RNA(n) + a ribonucleoside 5'-triphosphate = RNA(n+1) + diphosphate</text>
        <dbReference type="Rhea" id="RHEA:21248"/>
        <dbReference type="Rhea" id="RHEA-COMP:14527"/>
        <dbReference type="Rhea" id="RHEA-COMP:17342"/>
        <dbReference type="ChEBI" id="CHEBI:33019"/>
        <dbReference type="ChEBI" id="CHEBI:61557"/>
        <dbReference type="ChEBI" id="CHEBI:140395"/>
        <dbReference type="EC" id="2.7.7.6"/>
    </reaction>
</comment>
<comment type="subunit">
    <text evidence="1 2">The RNAP catalytic core consists of 2 alpha, 1 beta, 1 beta' and 1 omega subunit. When a sigma factor is associated with the core the holoenzyme is formed, which can initiate transcription. The RNAP complex including the principal sigma factor HrdB also interacts with RNA-binding protein RbpA.</text>
</comment>
<comment type="similarity">
    <text evidence="1">Belongs to the RNA polymerase beta chain family.</text>
</comment>
<sequence length="1161" mass="128494">MAASRNASTANTNNAASTAPLRISFAKIKEPLEVPNLLALQTESFDWLLGNDAWKARVESALESGQDVPTKSGLEEIFEEISPIEDFSGSMSLTFRDHRFEPPKNSIDECKDRDFTYAAPLFVTAEFTNNETGEIKSQTVFMGDFPLMTNKGTFVINGTERVVVSQLVRSPGVYFDSSIDKTSDKDIFSAKIIPSRGAWLEMEIDKRDMVGVRIDRKRKQSVTVLLKALGWTTEQILEEFGEYESMRATLEKDHTQGQDDALLDIYRKLRPGEPPTREAAQTLLENLYFNPKRYDLAKVGRYKVNKKLGADEPLDAGVLTTDDVIATIKYLVKLHAGETETVGESGREIVVETDDIDHFGNRRIRNVGELIQNQVRTGLARMERVVRERMTTQDVEAITPQTLINIRPVVASIKEFFGTSQLSQFMDQNNPLSGLTHKRRLNALGPGGLSRERAGFEVRDVHPSHYGRMCPIETPEGPNIGLIGSLASYGRINPFGFIETPYRKVVEGQVTDDVDYLTADEEDRFVIAQANAALGDDMRFAEARVLVRRRGGEVDYVPGDDVDYMDVSPRQMVSVATAMIPFLEHDDANRALMGANMMRQAVPLIKSESPLVGTGMEYRSAADAGDVVKAEKAGVVQEVSADYITTTNDDGTYITYRLAKFSRSNQGTSVNQKVIVAEGDRIIEGQVLADGPATENGEMALGKNLLVAFMPWEGHNYEDAIILSQRLVQDDVLSSIHIEEHEVDARDTKLGPEEITRDIPNVSEEVLADLDERGIIRIGAEVVAGDILVGKVTPKGETELTPEERLLRAIFGEKAREVRDTSLKVPHGEIGKVIGVRVFDREEGDELPPGVNQLVRVYVAQKRKITDGDKLAGRHGNKGVISKINPIEDMPFLEDGTPVDIILNPLAVPSRMNPGQVLEIHLGWLASRGWDVSGLAEEWAQRLQVIGADKVEPGTNVATPVFDGAREDELAGLLQHTIPNRDGERMVLPSGKARLFDGRSGEPFPEPISVGYMYILKLHHLVDDKLHARSTGPYSMITQQPLGGKAQFGGQRFGEMEVWALEAYGAAYALQELLTIKSDDVTGRVKVYEAIVKGENIPEPGIPESFKVLIKEMQSLCLNVEVLSSDGMSIEMRDTDEDVFRAAEELGIDLSRREPSSVEEV</sequence>
<name>RPOB_STRCO</name>
<feature type="chain" id="PRO_0000047972" description="DNA-directed RNA polymerase subunit beta">
    <location>
        <begin position="1"/>
        <end position="1161"/>
    </location>
</feature>
<feature type="helix" evidence="4">
    <location>
        <begin position="39"/>
        <end position="49"/>
    </location>
</feature>
<feature type="helix" evidence="4">
    <location>
        <begin position="52"/>
        <end position="64"/>
    </location>
</feature>
<feature type="helix" evidence="4">
    <location>
        <begin position="74"/>
        <end position="80"/>
    </location>
</feature>
<feature type="strand" evidence="4">
    <location>
        <begin position="91"/>
        <end position="100"/>
    </location>
</feature>
<feature type="helix" evidence="4">
    <location>
        <begin position="107"/>
        <end position="112"/>
    </location>
</feature>
<feature type="strand" evidence="4">
    <location>
        <begin position="118"/>
        <end position="129"/>
    </location>
</feature>
<feature type="turn" evidence="4">
    <location>
        <begin position="130"/>
        <end position="133"/>
    </location>
</feature>
<feature type="strand" evidence="4">
    <location>
        <begin position="134"/>
        <end position="146"/>
    </location>
</feature>
<feature type="strand" evidence="4">
    <location>
        <begin position="154"/>
        <end position="156"/>
    </location>
</feature>
<feature type="strand" evidence="4">
    <location>
        <begin position="159"/>
        <end position="163"/>
    </location>
</feature>
<feature type="strand" evidence="4">
    <location>
        <begin position="165"/>
        <end position="169"/>
    </location>
</feature>
<feature type="strand" evidence="4">
    <location>
        <begin position="171"/>
        <end position="180"/>
    </location>
</feature>
<feature type="turn" evidence="4">
    <location>
        <begin position="181"/>
        <end position="184"/>
    </location>
</feature>
<feature type="strand" evidence="4">
    <location>
        <begin position="185"/>
        <end position="193"/>
    </location>
</feature>
<feature type="strand" evidence="4">
    <location>
        <begin position="195"/>
        <end position="197"/>
    </location>
</feature>
<feature type="strand" evidence="4">
    <location>
        <begin position="200"/>
        <end position="204"/>
    </location>
</feature>
<feature type="strand" evidence="4">
    <location>
        <begin position="206"/>
        <end position="208"/>
    </location>
</feature>
<feature type="strand" evidence="4">
    <location>
        <begin position="211"/>
        <end position="214"/>
    </location>
</feature>
<feature type="strand" evidence="5">
    <location>
        <begin position="217"/>
        <end position="221"/>
    </location>
</feature>
<feature type="helix" evidence="4">
    <location>
        <begin position="223"/>
        <end position="228"/>
    </location>
</feature>
<feature type="helix" evidence="4">
    <location>
        <begin position="233"/>
        <end position="239"/>
    </location>
</feature>
<feature type="helix" evidence="4">
    <location>
        <begin position="244"/>
        <end position="252"/>
    </location>
</feature>
<feature type="helix" evidence="4">
    <location>
        <begin position="258"/>
        <end position="269"/>
    </location>
</feature>
<feature type="helix" evidence="4">
    <location>
        <begin position="277"/>
        <end position="287"/>
    </location>
</feature>
<feature type="turn" evidence="4">
    <location>
        <begin position="291"/>
        <end position="293"/>
    </location>
</feature>
<feature type="helix" evidence="4">
    <location>
        <begin position="298"/>
        <end position="308"/>
    </location>
</feature>
<feature type="strand" evidence="5">
    <location>
        <begin position="310"/>
        <end position="312"/>
    </location>
</feature>
<feature type="strand" evidence="5">
    <location>
        <begin position="315"/>
        <end position="317"/>
    </location>
</feature>
<feature type="helix" evidence="4">
    <location>
        <begin position="321"/>
        <end position="336"/>
    </location>
</feature>
<feature type="strand" evidence="4">
    <location>
        <begin position="339"/>
        <end position="342"/>
    </location>
</feature>
<feature type="strand" evidence="4">
    <location>
        <begin position="348"/>
        <end position="350"/>
    </location>
</feature>
<feature type="strand" evidence="5">
    <location>
        <begin position="356"/>
        <end position="358"/>
    </location>
</feature>
<feature type="strand" evidence="4">
    <location>
        <begin position="361"/>
        <end position="365"/>
    </location>
</feature>
<feature type="helix" evidence="4">
    <location>
        <begin position="367"/>
        <end position="391"/>
    </location>
</feature>
<feature type="helix" evidence="4">
    <location>
        <begin position="400"/>
        <end position="403"/>
    </location>
</feature>
<feature type="helix" evidence="4">
    <location>
        <begin position="407"/>
        <end position="417"/>
    </location>
</feature>
<feature type="strand" evidence="4">
    <location>
        <begin position="421"/>
        <end position="425"/>
    </location>
</feature>
<feature type="helix" evidence="4">
    <location>
        <begin position="431"/>
        <end position="439"/>
    </location>
</feature>
<feature type="strand" evidence="4">
    <location>
        <begin position="440"/>
        <end position="443"/>
    </location>
</feature>
<feature type="helix" evidence="4">
    <location>
        <begin position="456"/>
        <end position="459"/>
    </location>
</feature>
<feature type="helix" evidence="4">
    <location>
        <begin position="463"/>
        <end position="465"/>
    </location>
</feature>
<feature type="turn" evidence="4">
    <location>
        <begin position="466"/>
        <end position="468"/>
    </location>
</feature>
<feature type="strand" evidence="5">
    <location>
        <begin position="476"/>
        <end position="479"/>
    </location>
</feature>
<feature type="turn" evidence="4">
    <location>
        <begin position="480"/>
        <end position="482"/>
    </location>
</feature>
<feature type="strand" evidence="4">
    <location>
        <begin position="483"/>
        <end position="485"/>
    </location>
</feature>
<feature type="strand" evidence="4">
    <location>
        <begin position="494"/>
        <end position="496"/>
    </location>
</feature>
<feature type="strand" evidence="4">
    <location>
        <begin position="498"/>
        <end position="506"/>
    </location>
</feature>
<feature type="strand" evidence="4">
    <location>
        <begin position="509"/>
        <end position="517"/>
    </location>
</feature>
<feature type="helix" evidence="4">
    <location>
        <begin position="521"/>
        <end position="524"/>
    </location>
</feature>
<feature type="strand" evidence="4">
    <location>
        <begin position="536"/>
        <end position="541"/>
    </location>
</feature>
<feature type="helix" evidence="4">
    <location>
        <begin position="550"/>
        <end position="552"/>
    </location>
</feature>
<feature type="strand" evidence="4">
    <location>
        <begin position="564"/>
        <end position="567"/>
    </location>
</feature>
<feature type="helix" evidence="4">
    <location>
        <begin position="569"/>
        <end position="571"/>
    </location>
</feature>
<feature type="helix" evidence="4">
    <location>
        <begin position="577"/>
        <end position="579"/>
    </location>
</feature>
<feature type="turn" evidence="4">
    <location>
        <begin position="581"/>
        <end position="585"/>
    </location>
</feature>
<feature type="helix" evidence="4">
    <location>
        <begin position="588"/>
        <end position="597"/>
    </location>
</feature>
<feature type="helix" evidence="4">
    <location>
        <begin position="598"/>
        <end position="600"/>
    </location>
</feature>
<feature type="strand" evidence="3">
    <location>
        <begin position="611"/>
        <end position="613"/>
    </location>
</feature>
<feature type="helix" evidence="4">
    <location>
        <begin position="617"/>
        <end position="622"/>
    </location>
</feature>
<feature type="strand" evidence="4">
    <location>
        <begin position="627"/>
        <end position="629"/>
    </location>
</feature>
<feature type="strand" evidence="4">
    <location>
        <begin position="634"/>
        <end position="639"/>
    </location>
</feature>
<feature type="strand" evidence="4">
    <location>
        <begin position="641"/>
        <end position="648"/>
    </location>
</feature>
<feature type="strand" evidence="4">
    <location>
        <begin position="653"/>
        <end position="657"/>
    </location>
</feature>
<feature type="strand" evidence="4">
    <location>
        <begin position="667"/>
        <end position="669"/>
    </location>
</feature>
<feature type="strand" evidence="4">
    <location>
        <begin position="687"/>
        <end position="689"/>
    </location>
</feature>
<feature type="strand" evidence="3">
    <location>
        <begin position="692"/>
        <end position="695"/>
    </location>
</feature>
<feature type="strand" evidence="4">
    <location>
        <begin position="702"/>
        <end position="709"/>
    </location>
</feature>
<feature type="turn" evidence="4">
    <location>
        <begin position="713"/>
        <end position="718"/>
    </location>
</feature>
<feature type="strand" evidence="4">
    <location>
        <begin position="721"/>
        <end position="724"/>
    </location>
</feature>
<feature type="helix" evidence="4">
    <location>
        <begin position="726"/>
        <end position="729"/>
    </location>
</feature>
<feature type="strand" evidence="4">
    <location>
        <begin position="735"/>
        <end position="747"/>
    </location>
</feature>
<feature type="helix" evidence="4">
    <location>
        <begin position="766"/>
        <end position="769"/>
    </location>
</feature>
<feature type="strand" evidence="4">
    <location>
        <begin position="774"/>
        <end position="776"/>
    </location>
</feature>
<feature type="strand" evidence="3">
    <location>
        <begin position="781"/>
        <end position="783"/>
    </location>
</feature>
<feature type="strand" evidence="4">
    <location>
        <begin position="787"/>
        <end position="789"/>
    </location>
</feature>
<feature type="strand" evidence="4">
    <location>
        <begin position="791"/>
        <end position="794"/>
    </location>
</feature>
<feature type="helix" evidence="4">
    <location>
        <begin position="802"/>
        <end position="811"/>
    </location>
</feature>
<feature type="strand" evidence="4">
    <location>
        <begin position="831"/>
        <end position="840"/>
    </location>
</feature>
<feature type="turn" evidence="4">
    <location>
        <begin position="841"/>
        <end position="844"/>
    </location>
</feature>
<feature type="strand" evidence="4">
    <location>
        <begin position="851"/>
        <end position="863"/>
    </location>
</feature>
<feature type="strand" evidence="4">
    <location>
        <begin position="870"/>
        <end position="872"/>
    </location>
</feature>
<feature type="strand" evidence="4">
    <location>
        <begin position="874"/>
        <end position="876"/>
    </location>
</feature>
<feature type="strand" evidence="4">
    <location>
        <begin position="878"/>
        <end position="885"/>
    </location>
</feature>
<feature type="helix" evidence="4">
    <location>
        <begin position="887"/>
        <end position="889"/>
    </location>
</feature>
<feature type="strand" evidence="4">
    <location>
        <begin position="900"/>
        <end position="903"/>
    </location>
</feature>
<feature type="helix" evidence="4">
    <location>
        <begin position="907"/>
        <end position="911"/>
    </location>
</feature>
<feature type="helix" evidence="4">
    <location>
        <begin position="915"/>
        <end position="927"/>
    </location>
</feature>
<feature type="helix" evidence="4">
    <location>
        <begin position="938"/>
        <end position="946"/>
    </location>
</feature>
<feature type="turn" evidence="4">
    <location>
        <begin position="947"/>
        <end position="949"/>
    </location>
</feature>
<feature type="strand" evidence="5">
    <location>
        <begin position="961"/>
        <end position="963"/>
    </location>
</feature>
<feature type="helix" evidence="4">
    <location>
        <begin position="967"/>
        <end position="975"/>
    </location>
</feature>
<feature type="strand" evidence="4">
    <location>
        <begin position="991"/>
        <end position="993"/>
    </location>
</feature>
<feature type="strand" evidence="4">
    <location>
        <begin position="998"/>
        <end position="1000"/>
    </location>
</feature>
<feature type="strand" evidence="4">
    <location>
        <begin position="1008"/>
        <end position="1019"/>
    </location>
</feature>
<feature type="helix" evidence="4">
    <location>
        <begin position="1022"/>
        <end position="1025"/>
    </location>
</feature>
<feature type="strand" evidence="4">
    <location>
        <begin position="1027"/>
        <end position="1031"/>
    </location>
</feature>
<feature type="strand" evidence="4">
    <location>
        <begin position="1034"/>
        <end position="1041"/>
    </location>
</feature>
<feature type="turn" evidence="4">
    <location>
        <begin position="1045"/>
        <end position="1048"/>
    </location>
</feature>
<feature type="helix" evidence="4">
    <location>
        <begin position="1055"/>
        <end position="1064"/>
    </location>
</feature>
<feature type="helix" evidence="4">
    <location>
        <begin position="1067"/>
        <end position="1074"/>
    </location>
</feature>
<feature type="strand" evidence="4">
    <location>
        <begin position="1077"/>
        <end position="1079"/>
    </location>
</feature>
<feature type="helix" evidence="4">
    <location>
        <begin position="1083"/>
        <end position="1093"/>
    </location>
</feature>
<feature type="helix" evidence="4">
    <location>
        <begin position="1104"/>
        <end position="1114"/>
    </location>
</feature>
<feature type="turn" evidence="4">
    <location>
        <begin position="1115"/>
        <end position="1117"/>
    </location>
</feature>
<feature type="strand" evidence="4">
    <location>
        <begin position="1121"/>
        <end position="1123"/>
    </location>
</feature>
<feature type="strand" evidence="4">
    <location>
        <begin position="1125"/>
        <end position="1128"/>
    </location>
</feature>